<accession>P19248</accession>
<keyword id="KW-0204">Cytolysis</keyword>
<keyword id="KW-0354">Hemolysis</keyword>
<keyword id="KW-0813">Transport</keyword>
<dbReference type="EMBL" id="M34670">
    <property type="protein sequence ID" value="AAA03244.1"/>
    <property type="molecule type" value="Unassigned_DNA"/>
</dbReference>
<dbReference type="EMBL" id="AE016796">
    <property type="protein sequence ID" value="AAO07359.2"/>
    <property type="molecule type" value="Genomic_DNA"/>
</dbReference>
<dbReference type="PIR" id="B41478">
    <property type="entry name" value="B41478"/>
</dbReference>
<dbReference type="KEGG" id="vvu:VV2_0403"/>
<dbReference type="HOGENOM" id="CLU_1585798_0_0_6"/>
<dbReference type="Proteomes" id="UP000002275">
    <property type="component" value="Chromosome 2"/>
</dbReference>
<dbReference type="GO" id="GO:0031640">
    <property type="term" value="P:killing of cells of another organism"/>
    <property type="evidence" value="ECO:0007669"/>
    <property type="project" value="UniProtKB-KW"/>
</dbReference>
<proteinExistence type="predicted"/>
<name>VVHB_VIBVU</name>
<reference key="1">
    <citation type="journal article" date="1990" name="Infect. Immun.">
        <title>The cytolysin gene of Vibrio vulnificus: sequence and relationship to the Vibrio cholerae E1 Tor hemolysin gene.</title>
        <authorList>
            <person name="Yamamoto K."/>
            <person name="Wright A.C."/>
            <person name="Kaper J.B."/>
            <person name="Morris J.G. Jr."/>
        </authorList>
    </citation>
    <scope>NUCLEOTIDE SEQUENCE [GENOMIC DNA]</scope>
</reference>
<reference key="2">
    <citation type="submission" date="2002-12" db="EMBL/GenBank/DDBJ databases">
        <title>Complete genome sequence of Vibrio vulnificus CMCP6.</title>
        <authorList>
            <person name="Rhee J.H."/>
            <person name="Kim S.Y."/>
            <person name="Chung S.S."/>
            <person name="Kim J.J."/>
            <person name="Moon Y.H."/>
            <person name="Jeong H."/>
            <person name="Choy H.E."/>
        </authorList>
    </citation>
    <scope>NUCLEOTIDE SEQUENCE [LARGE SCALE GENOMIC DNA]</scope>
    <source>
        <strain>CMCP6</strain>
    </source>
</reference>
<feature type="chain" id="PRO_0000196248" description="Cytolysin secretion protein">
    <location>
        <begin position="1"/>
        <end position="168"/>
    </location>
</feature>
<feature type="sequence conflict" description="In Ref. 1; AAA03244." evidence="1" ref="1">
    <original>V</original>
    <variation>L</variation>
    <location>
        <position position="14"/>
    </location>
</feature>
<protein>
    <recommendedName>
        <fullName>Cytolysin secretion protein</fullName>
    </recommendedName>
</protein>
<gene>
    <name type="primary">vvhB</name>
    <name type="ordered locus">VV2_0403</name>
</gene>
<evidence type="ECO:0000305" key="1"/>
<organism>
    <name type="scientific">Vibrio vulnificus (strain CMCP6)</name>
    <dbReference type="NCBI Taxonomy" id="216895"/>
    <lineage>
        <taxon>Bacteria</taxon>
        <taxon>Pseudomonadati</taxon>
        <taxon>Pseudomonadota</taxon>
        <taxon>Gammaproteobacteria</taxon>
        <taxon>Vibrionales</taxon>
        <taxon>Vibrionaceae</taxon>
        <taxon>Vibrio</taxon>
    </lineage>
</organism>
<sequence>MLNNKNRNVGRLTVLCCLFAANTFADVQILGSESELSQTIADQYQQNVTLFNGQLNSNDVLYVNVGTATDDEITQAKSHIISGSTVVIDLTQIAGDDARLDWSQKLTGLGLSAPVVVTGVYQGDALVNAIVSDVTDENDNPINDPQAELESVKLSLTHALDRFQSEGK</sequence>